<comment type="function">
    <text evidence="8 12">Probably plays a role in cartilage scaffolding. May act by antagonizing TGF-beta1 (TGFB1) and IGF1 functions. Has the ability to suppress IGF1-induced proliferation and sulfated proteoglycan synthesis, and inhibits ligand-induced IGF1R autophosphorylation. May inhibit TGFB1-mediated induction of cartilage matrix genes via its interaction with TGFB1. Overexpression may lead to impair chondrocyte growth and matrix repair and indirectly promote inorganic pyrophosphate (PPi) supersaturation in aging and osteoarthritis cartilage.</text>
</comment>
<comment type="subunit">
    <text evidence="12 14">Monomer. Interacts with TGFB1.</text>
</comment>
<comment type="subcellular location">
    <subcellularLocation>
        <location evidence="12">Secreted</location>
        <location evidence="12">Extracellular space</location>
        <location evidence="12">Extracellular matrix</location>
    </subcellularLocation>
</comment>
<comment type="tissue specificity">
    <text evidence="7 12 14 15">Specifically expressed in cartilage. Localizes in the intermediates layer of articular cartilage but neither in the superficial nor in the deepest regions. Specifically and highly expressed in intervertebral disk tissue. Expression increases with aging in hip articular cartilage. Overexpressed in articular hyaline cartilage from patients with calcium pyrophosphate dihydrate crystal deposition disease (CPPD). Expression in intervertebral disk tissue from individuals with lumbar disk disease increases as disk degeneration progresses.</text>
</comment>
<comment type="PTM">
    <text>Cleaved into 2 chains possibly by a furin-like protease upon or preceding secretion.</text>
</comment>
<comment type="disease" evidence="12">
    <disease id="DI-01829">
        <name>Intervertebral disc disease</name>
        <acronym>IDD</acronym>
        <description>A common musculo-skeletal disorder caused by degeneration of intervertebral disks of the lumbar spine. It results in low-back pain and unilateral leg pain.</description>
        <dbReference type="MIM" id="603932"/>
    </disease>
    <text>Disease susceptibility is associated with variants affecting the gene represented in this entry.</text>
</comment>
<comment type="miscellaneous">
    <text>Antibodies against CILP are detected in patients with early-stage knee osteoarthritis and rheumatoid arthritis.</text>
</comment>
<comment type="caution">
    <text evidence="16">Was originally thought to constitute the ATP pyrophosphatase enzyme (NTPPH). However, it was later shown (PubMed:12746903, PubMed:15864306) that it is not the case.</text>
</comment>
<name>CILP1_HUMAN</name>
<keyword id="KW-0165">Cleavage on pair of basic residues</keyword>
<keyword id="KW-0903">Direct protein sequencing</keyword>
<keyword id="KW-1015">Disulfide bond</keyword>
<keyword id="KW-0272">Extracellular matrix</keyword>
<keyword id="KW-0325">Glycoprotein</keyword>
<keyword id="KW-0393">Immunoglobulin domain</keyword>
<keyword id="KW-1267">Proteomics identification</keyword>
<keyword id="KW-1185">Reference proteome</keyword>
<keyword id="KW-0964">Secreted</keyword>
<keyword id="KW-0732">Signal</keyword>
<reference key="1">
    <citation type="journal article" date="1998" name="J. Biol. Chem.">
        <title>Cloning and deduced amino acid sequence of a novel cartilage protein (CILP) identifies a proform including a nucleotide pyrophosphohydrolase.</title>
        <authorList>
            <person name="Lorenzo P."/>
            <person name="Neame P."/>
            <person name="Sommarin Y."/>
            <person name="Heinegaerd D."/>
        </authorList>
    </citation>
    <scope>NUCLEOTIDE SEQUENCE [MRNA]</scope>
    <scope>PROTEIN SEQUENCE OF 39-58; 282-291; 301-317; 332-338; 341-356; 361-365; 524-547; 575-594; 680-690 AND 698-707</scope>
    <scope>GLYCOSYLATION AT ASN-346</scope>
    <scope>PROTEOLYTIC PROCESSING</scope>
    <scope>TISSUE SPECIFICITY</scope>
    <scope>VARIANTS LEU-59; THR-395; GLU-575; ARG-979 AND SER-1166</scope>
    <source>
        <tissue>Articular cartilage</tissue>
    </source>
</reference>
<reference key="2">
    <citation type="journal article" date="1999" name="J. Hum. Genet.">
        <title>Genomic organization, mapping, and polymorphisms of the gene encoding human cartilage intermediate layer protein (CILP).</title>
        <authorList>
            <person name="Nakamura I."/>
            <person name="Okawa A."/>
            <person name="Ikegawa S."/>
            <person name="Takaoka K."/>
            <person name="Nakamura Y."/>
        </authorList>
    </citation>
    <scope>NUCLEOTIDE SEQUENCE [GENOMIC DNA]</scope>
    <scope>VARIANTS LEU-59; PHE-327; THR-395; GLU-575; VAL-895; ARG-979; ASN-1101; SER-1166 AND ALA-1168</scope>
</reference>
<reference key="3">
    <citation type="journal article" date="1999" name="Matrix Biol.">
        <title>The human CILP gene: exon/intron organization and chromosomal mapping.</title>
        <authorList>
            <person name="Lorenzo P."/>
            <person name="Aman P."/>
            <person name="Sommarin Y."/>
            <person name="Heinegaerd D."/>
        </authorList>
    </citation>
    <scope>NUCLEOTIDE SEQUENCE [GENOMIC DNA]</scope>
    <scope>VARIANTS LEU-59; THR-395; GLU-575; ARG-979 AND SER-1166</scope>
</reference>
<reference key="4">
    <citation type="journal article" date="2003" name="Genome Res.">
        <title>The secreted protein discovery initiative (SPDI), a large-scale effort to identify novel human secreted and transmembrane proteins: a bioinformatics assessment.</title>
        <authorList>
            <person name="Clark H.F."/>
            <person name="Gurney A.L."/>
            <person name="Abaya E."/>
            <person name="Baker K."/>
            <person name="Baldwin D.T."/>
            <person name="Brush J."/>
            <person name="Chen J."/>
            <person name="Chow B."/>
            <person name="Chui C."/>
            <person name="Crowley C."/>
            <person name="Currell B."/>
            <person name="Deuel B."/>
            <person name="Dowd P."/>
            <person name="Eaton D."/>
            <person name="Foster J.S."/>
            <person name="Grimaldi C."/>
            <person name="Gu Q."/>
            <person name="Hass P.E."/>
            <person name="Heldens S."/>
            <person name="Huang A."/>
            <person name="Kim H.S."/>
            <person name="Klimowski L."/>
            <person name="Jin Y."/>
            <person name="Johnson S."/>
            <person name="Lee J."/>
            <person name="Lewis L."/>
            <person name="Liao D."/>
            <person name="Mark M.R."/>
            <person name="Robbie E."/>
            <person name="Sanchez C."/>
            <person name="Schoenfeld J."/>
            <person name="Seshagiri S."/>
            <person name="Simmons L."/>
            <person name="Singh J."/>
            <person name="Smith V."/>
            <person name="Stinson J."/>
            <person name="Vagts A."/>
            <person name="Vandlen R.L."/>
            <person name="Watanabe C."/>
            <person name="Wieand D."/>
            <person name="Woods K."/>
            <person name="Xie M.-H."/>
            <person name="Yansura D.G."/>
            <person name="Yi S."/>
            <person name="Yu G."/>
            <person name="Yuan J."/>
            <person name="Zhang M."/>
            <person name="Zhang Z."/>
            <person name="Goddard A.D."/>
            <person name="Wood W.I."/>
            <person name="Godowski P.J."/>
            <person name="Gray A.M."/>
        </authorList>
    </citation>
    <scope>NUCLEOTIDE SEQUENCE [LARGE SCALE MRNA]</scope>
    <scope>VARIANTS THR-395; GLU-575 AND ARG-979</scope>
</reference>
<reference key="5">
    <citation type="journal article" date="2004" name="Nat. Genet.">
        <title>Complete sequencing and characterization of 21,243 full-length human cDNAs.</title>
        <authorList>
            <person name="Ota T."/>
            <person name="Suzuki Y."/>
            <person name="Nishikawa T."/>
            <person name="Otsuki T."/>
            <person name="Sugiyama T."/>
            <person name="Irie R."/>
            <person name="Wakamatsu A."/>
            <person name="Hayashi K."/>
            <person name="Sato H."/>
            <person name="Nagai K."/>
            <person name="Kimura K."/>
            <person name="Makita H."/>
            <person name="Sekine M."/>
            <person name="Obayashi M."/>
            <person name="Nishi T."/>
            <person name="Shibahara T."/>
            <person name="Tanaka T."/>
            <person name="Ishii S."/>
            <person name="Yamamoto J."/>
            <person name="Saito K."/>
            <person name="Kawai Y."/>
            <person name="Isono Y."/>
            <person name="Nakamura Y."/>
            <person name="Nagahari K."/>
            <person name="Murakami K."/>
            <person name="Yasuda T."/>
            <person name="Iwayanagi T."/>
            <person name="Wagatsuma M."/>
            <person name="Shiratori A."/>
            <person name="Sudo H."/>
            <person name="Hosoiri T."/>
            <person name="Kaku Y."/>
            <person name="Kodaira H."/>
            <person name="Kondo H."/>
            <person name="Sugawara M."/>
            <person name="Takahashi M."/>
            <person name="Kanda K."/>
            <person name="Yokoi T."/>
            <person name="Furuya T."/>
            <person name="Kikkawa E."/>
            <person name="Omura Y."/>
            <person name="Abe K."/>
            <person name="Kamihara K."/>
            <person name="Katsuta N."/>
            <person name="Sato K."/>
            <person name="Tanikawa M."/>
            <person name="Yamazaki M."/>
            <person name="Ninomiya K."/>
            <person name="Ishibashi T."/>
            <person name="Yamashita H."/>
            <person name="Murakawa K."/>
            <person name="Fujimori K."/>
            <person name="Tanai H."/>
            <person name="Kimata M."/>
            <person name="Watanabe M."/>
            <person name="Hiraoka S."/>
            <person name="Chiba Y."/>
            <person name="Ishida S."/>
            <person name="Ono Y."/>
            <person name="Takiguchi S."/>
            <person name="Watanabe S."/>
            <person name="Yosida M."/>
            <person name="Hotuta T."/>
            <person name="Kusano J."/>
            <person name="Kanehori K."/>
            <person name="Takahashi-Fujii A."/>
            <person name="Hara H."/>
            <person name="Tanase T.-O."/>
            <person name="Nomura Y."/>
            <person name="Togiya S."/>
            <person name="Komai F."/>
            <person name="Hara R."/>
            <person name="Takeuchi K."/>
            <person name="Arita M."/>
            <person name="Imose N."/>
            <person name="Musashino K."/>
            <person name="Yuuki H."/>
            <person name="Oshima A."/>
            <person name="Sasaki N."/>
            <person name="Aotsuka S."/>
            <person name="Yoshikawa Y."/>
            <person name="Matsunawa H."/>
            <person name="Ichihara T."/>
            <person name="Shiohata N."/>
            <person name="Sano S."/>
            <person name="Moriya S."/>
            <person name="Momiyama H."/>
            <person name="Satoh N."/>
            <person name="Takami S."/>
            <person name="Terashima Y."/>
            <person name="Suzuki O."/>
            <person name="Nakagawa S."/>
            <person name="Senoh A."/>
            <person name="Mizoguchi H."/>
            <person name="Goto Y."/>
            <person name="Shimizu F."/>
            <person name="Wakebe H."/>
            <person name="Hishigaki H."/>
            <person name="Watanabe T."/>
            <person name="Sugiyama A."/>
            <person name="Takemoto M."/>
            <person name="Kawakami B."/>
            <person name="Yamazaki M."/>
            <person name="Watanabe K."/>
            <person name="Kumagai A."/>
            <person name="Itakura S."/>
            <person name="Fukuzumi Y."/>
            <person name="Fujimori Y."/>
            <person name="Komiyama M."/>
            <person name="Tashiro H."/>
            <person name="Tanigami A."/>
            <person name="Fujiwara T."/>
            <person name="Ono T."/>
            <person name="Yamada K."/>
            <person name="Fujii Y."/>
            <person name="Ozaki K."/>
            <person name="Hirao M."/>
            <person name="Ohmori Y."/>
            <person name="Kawabata A."/>
            <person name="Hikiji T."/>
            <person name="Kobatake N."/>
            <person name="Inagaki H."/>
            <person name="Ikema Y."/>
            <person name="Okamoto S."/>
            <person name="Okitani R."/>
            <person name="Kawakami T."/>
            <person name="Noguchi S."/>
            <person name="Itoh T."/>
            <person name="Shigeta K."/>
            <person name="Senba T."/>
            <person name="Matsumura K."/>
            <person name="Nakajima Y."/>
            <person name="Mizuno T."/>
            <person name="Morinaga M."/>
            <person name="Sasaki M."/>
            <person name="Togashi T."/>
            <person name="Oyama M."/>
            <person name="Hata H."/>
            <person name="Watanabe M."/>
            <person name="Komatsu T."/>
            <person name="Mizushima-Sugano J."/>
            <person name="Satoh T."/>
            <person name="Shirai Y."/>
            <person name="Takahashi Y."/>
            <person name="Nakagawa K."/>
            <person name="Okumura K."/>
            <person name="Nagase T."/>
            <person name="Nomura N."/>
            <person name="Kikuchi H."/>
            <person name="Masuho Y."/>
            <person name="Yamashita R."/>
            <person name="Nakai K."/>
            <person name="Yada T."/>
            <person name="Nakamura Y."/>
            <person name="Ohara O."/>
            <person name="Isogai T."/>
            <person name="Sugano S."/>
        </authorList>
    </citation>
    <scope>NUCLEOTIDE SEQUENCE [LARGE SCALE MRNA]</scope>
    <scope>VARIANTS THR-395; GLU-575; ARG-979 AND SER-1166</scope>
    <source>
        <tissue>Testis</tissue>
    </source>
</reference>
<reference key="6">
    <citation type="journal article" date="2006" name="Nature">
        <title>Analysis of the DNA sequence and duplication history of human chromosome 15.</title>
        <authorList>
            <person name="Zody M.C."/>
            <person name="Garber M."/>
            <person name="Sharpe T."/>
            <person name="Young S.K."/>
            <person name="Rowen L."/>
            <person name="O'Neill K."/>
            <person name="Whittaker C.A."/>
            <person name="Kamal M."/>
            <person name="Chang J.L."/>
            <person name="Cuomo C.A."/>
            <person name="Dewar K."/>
            <person name="FitzGerald M.G."/>
            <person name="Kodira C.D."/>
            <person name="Madan A."/>
            <person name="Qin S."/>
            <person name="Yang X."/>
            <person name="Abbasi N."/>
            <person name="Abouelleil A."/>
            <person name="Arachchi H.M."/>
            <person name="Baradarani L."/>
            <person name="Birditt B."/>
            <person name="Bloom S."/>
            <person name="Bloom T."/>
            <person name="Borowsky M.L."/>
            <person name="Burke J."/>
            <person name="Butler J."/>
            <person name="Cook A."/>
            <person name="DeArellano K."/>
            <person name="DeCaprio D."/>
            <person name="Dorris L. III"/>
            <person name="Dors M."/>
            <person name="Eichler E.E."/>
            <person name="Engels R."/>
            <person name="Fahey J."/>
            <person name="Fleetwood P."/>
            <person name="Friedman C."/>
            <person name="Gearin G."/>
            <person name="Hall J.L."/>
            <person name="Hensley G."/>
            <person name="Johnson E."/>
            <person name="Jones C."/>
            <person name="Kamat A."/>
            <person name="Kaur A."/>
            <person name="Locke D.P."/>
            <person name="Madan A."/>
            <person name="Munson G."/>
            <person name="Jaffe D.B."/>
            <person name="Lui A."/>
            <person name="Macdonald P."/>
            <person name="Mauceli E."/>
            <person name="Naylor J.W."/>
            <person name="Nesbitt R."/>
            <person name="Nicol R."/>
            <person name="O'Leary S.B."/>
            <person name="Ratcliffe A."/>
            <person name="Rounsley S."/>
            <person name="She X."/>
            <person name="Sneddon K.M.B."/>
            <person name="Stewart S."/>
            <person name="Sougnez C."/>
            <person name="Stone S.M."/>
            <person name="Topham K."/>
            <person name="Vincent D."/>
            <person name="Wang S."/>
            <person name="Zimmer A.R."/>
            <person name="Birren B.W."/>
            <person name="Hood L."/>
            <person name="Lander E.S."/>
            <person name="Nusbaum C."/>
        </authorList>
    </citation>
    <scope>NUCLEOTIDE SEQUENCE [LARGE SCALE GENOMIC DNA]</scope>
</reference>
<reference key="7">
    <citation type="journal article" date="2004" name="Genome Res.">
        <title>The status, quality, and expansion of the NIH full-length cDNA project: the Mammalian Gene Collection (MGC).</title>
        <authorList>
            <consortium name="The MGC Project Team"/>
        </authorList>
    </citation>
    <scope>NUCLEOTIDE SEQUENCE [LARGE SCALE MRNA]</scope>
    <scope>VARIANTS GLU-575; ARG-979 AND SER-1166</scope>
    <source>
        <tissue>Ovary</tissue>
    </source>
</reference>
<reference key="8">
    <citation type="journal article" date="1998" name="J. Biol. Chem.">
        <title>A novel cartilage protein (CILP) present in the mid-zone of human articular cartilage increases with age.</title>
        <authorList>
            <person name="Lorenzo P."/>
            <person name="Bayliss M.T."/>
            <person name="Heinegaerd D."/>
        </authorList>
    </citation>
    <scope>SUBUNIT</scope>
    <scope>GLYCOSYLATION</scope>
    <scope>TISSUE SPECIFICITY</scope>
</reference>
<reference key="9">
    <citation type="journal article" date="2002" name="Arthritis Rheum.">
        <title>Up-regulated expression of cartilage intermediate-layer protein and ANK in articular hyaline cartilage from patients with calcium pyrophosphate dihydrate crystal deposition disease.</title>
        <authorList>
            <person name="Hirose J."/>
            <person name="Ryan L.M."/>
            <person name="Masuda I."/>
        </authorList>
    </citation>
    <scope>TISSUE SPECIFICITY</scope>
</reference>
<reference key="10">
    <citation type="journal article" date="2001" name="Arthritis Rheum.">
        <title>Implication of cartilage intermediate layer protein in cartilage destruction in subsets of patients with osteoarthritis and rheumatoid arthritis.</title>
        <authorList>
            <person name="Tsuruha J."/>
            <person name="Masuko-Hongo K."/>
            <person name="Kato T."/>
            <person name="Sakata M."/>
            <person name="Nakamura H."/>
            <person name="Nishioka K."/>
        </authorList>
    </citation>
    <scope>INVOLVEMENT IN OSTEOARTHRITIS AND RHEUMATOID ARTHRITIS</scope>
</reference>
<reference key="11">
    <citation type="journal article" date="2003" name="Arthritis Rheum.">
        <title>One of two chondrocyte-expressed isoforms of cartilage intermediate-layer protein functions as an insulin-like growth factor 1 antagonist.</title>
        <authorList>
            <person name="Johnson K."/>
            <person name="Farley D."/>
            <person name="Hu S.-I."/>
            <person name="Terkeltaub R."/>
        </authorList>
    </citation>
    <scope>FUNCTION</scope>
</reference>
<reference key="12">
    <citation type="journal article" date="2004" name="Ann. Rheum. Dis.">
        <title>Characterisation of cartilage intermediate layer protein (CILP)-induced arthropathy in mice.</title>
        <authorList>
            <person name="Yao Z."/>
            <person name="Nakamura H."/>
            <person name="Masuko-Hongo K."/>
            <person name="Suzuki-Kurokawa M."/>
            <person name="Nishioka K."/>
            <person name="Kato T."/>
        </authorList>
    </citation>
    <scope>IMMUNIZATION</scope>
</reference>
<reference key="13">
    <citation type="journal article" date="2005" name="Rheumatol. Int.">
        <title>The prevalence of autoantibodies against cartilage intermediate layer protein, YKL-39, osteopontin, and cyclic citrullinated peptide in patients with early-stage knee osteoarthritis: evidence of a variety of autoimmune processes.</title>
        <authorList>
            <person name="Du H."/>
            <person name="Masuko-Hongo K."/>
            <person name="Nakamura H."/>
            <person name="Xiang Y."/>
            <person name="Bao C.-D."/>
            <person name="Wang X.-D."/>
            <person name="Chen S.-L."/>
            <person name="Nishioka K."/>
            <person name="Kato T."/>
        </authorList>
    </citation>
    <scope>INVOLVEMENT IN OSTEOARTHRITIS</scope>
</reference>
<reference key="14">
    <citation type="journal article" date="2005" name="Nat. Genet.">
        <title>A functional SNP in CILP, encoding cartilage intermediate layer protein, is associated with susceptibility to lumbar disc disease.</title>
        <authorList>
            <person name="Seki S."/>
            <person name="Kawaguchi Y."/>
            <person name="Chiba K."/>
            <person name="Mikami Y."/>
            <person name="Kizawa H."/>
            <person name="Oya T."/>
            <person name="Mio F."/>
            <person name="Mori M."/>
            <person name="Miyamoto Y."/>
            <person name="Masuda I."/>
            <person name="Tsunoda T."/>
            <person name="Kamata M."/>
            <person name="Kubo T."/>
            <person name="Toyama Y."/>
            <person name="Kimura T."/>
            <person name="Nakamura Y."/>
            <person name="Ikegawa S."/>
        </authorList>
    </citation>
    <scope>FUNCTION</scope>
    <scope>SUBCELLULAR LOCATION</scope>
    <scope>TISSUE SPECIFICITY</scope>
    <scope>INTERACTION WITH TGFB1</scope>
    <scope>INVOLVEMENT IN IDD</scope>
    <scope>VARIANT THR-395</scope>
</reference>
<reference key="15">
    <citation type="journal article" date="2012" name="N. Engl. J. Med.">
        <title>Diagnostic exome sequencing in persons with severe intellectual disability.</title>
        <authorList>
            <person name="de Ligt J."/>
            <person name="Willemsen M.H."/>
            <person name="van Bon B.W."/>
            <person name="Kleefstra T."/>
            <person name="Yntema H.G."/>
            <person name="Kroes T."/>
            <person name="Vulto-van Silfhout A.T."/>
            <person name="Koolen D.A."/>
            <person name="de Vries P."/>
            <person name="Gilissen C."/>
            <person name="del Rosario M."/>
            <person name="Hoischen A."/>
            <person name="Scheffer H."/>
            <person name="de Vries B.B."/>
            <person name="Brunner H.G."/>
            <person name="Veltman J.A."/>
            <person name="Vissers L.E."/>
        </authorList>
    </citation>
    <scope>VARIANTS HIS-495 AND THR-1032</scope>
</reference>
<gene>
    <name type="primary">CILP</name>
    <name type="ORF">UNQ602/PRO1188</name>
</gene>
<organism>
    <name type="scientific">Homo sapiens</name>
    <name type="common">Human</name>
    <dbReference type="NCBI Taxonomy" id="9606"/>
    <lineage>
        <taxon>Eukaryota</taxon>
        <taxon>Metazoa</taxon>
        <taxon>Chordata</taxon>
        <taxon>Craniata</taxon>
        <taxon>Vertebrata</taxon>
        <taxon>Euteleostomi</taxon>
        <taxon>Mammalia</taxon>
        <taxon>Eutheria</taxon>
        <taxon>Euarchontoglires</taxon>
        <taxon>Primates</taxon>
        <taxon>Haplorrhini</taxon>
        <taxon>Catarrhini</taxon>
        <taxon>Hominidae</taxon>
        <taxon>Homo</taxon>
    </lineage>
</organism>
<protein>
    <recommendedName>
        <fullName>Cartilage intermediate layer protein 1</fullName>
        <shortName>CILP-1</shortName>
    </recommendedName>
    <alternativeName>
        <fullName>Cartilage intermediate-layer protein</fullName>
    </alternativeName>
    <component>
        <recommendedName>
            <fullName>Cartilage intermediate layer protein 1 C1</fullName>
        </recommendedName>
    </component>
    <component>
        <recommendedName>
            <fullName>Cartilage intermediate layer protein 1 C2</fullName>
        </recommendedName>
    </component>
</protein>
<evidence type="ECO:0000250" key="1"/>
<evidence type="ECO:0000255" key="2"/>
<evidence type="ECO:0000255" key="3">
    <source>
        <dbReference type="PROSITE-ProRule" id="PRU00210"/>
    </source>
</evidence>
<evidence type="ECO:0000256" key="4">
    <source>
        <dbReference type="SAM" id="MobiDB-lite"/>
    </source>
</evidence>
<evidence type="ECO:0000269" key="5">
    <source>
    </source>
</evidence>
<evidence type="ECO:0000269" key="6">
    <source>
    </source>
</evidence>
<evidence type="ECO:0000269" key="7">
    <source>
    </source>
</evidence>
<evidence type="ECO:0000269" key="8">
    <source>
    </source>
</evidence>
<evidence type="ECO:0000269" key="9">
    <source>
    </source>
</evidence>
<evidence type="ECO:0000269" key="10">
    <source>
    </source>
</evidence>
<evidence type="ECO:0000269" key="11">
    <source>
    </source>
</evidence>
<evidence type="ECO:0000269" key="12">
    <source>
    </source>
</evidence>
<evidence type="ECO:0000269" key="13">
    <source>
    </source>
</evidence>
<evidence type="ECO:0000269" key="14">
    <source>
    </source>
</evidence>
<evidence type="ECO:0000269" key="15">
    <source>
    </source>
</evidence>
<evidence type="ECO:0000305" key="16"/>
<evidence type="ECO:0000305" key="17">
    <source>
    </source>
</evidence>
<feature type="signal peptide" evidence="2">
    <location>
        <begin position="1"/>
        <end position="21"/>
    </location>
</feature>
<feature type="chain" id="PRO_0000014671" description="Cartilage intermediate layer protein 1">
    <location>
        <begin position="22"/>
        <end position="1184"/>
    </location>
</feature>
<feature type="chain" id="PRO_0000014672" description="Cartilage intermediate layer protein 1 C1">
    <location>
        <begin position="22"/>
        <end position="724" status="uncertain"/>
    </location>
</feature>
<feature type="chain" id="PRO_0000014673" description="Cartilage intermediate layer protein 1 C2">
    <location>
        <begin position="725" status="uncertain"/>
        <end position="1184"/>
    </location>
</feature>
<feature type="domain" description="TSP type-1" evidence="3">
    <location>
        <begin position="149"/>
        <end position="201"/>
    </location>
</feature>
<feature type="domain" description="Ig-like C2-type">
    <location>
        <begin position="309"/>
        <end position="395"/>
    </location>
</feature>
<feature type="region of interest" description="Disordered" evidence="4">
    <location>
        <begin position="1136"/>
        <end position="1170"/>
    </location>
</feature>
<feature type="compositionally biased region" description="Low complexity" evidence="4">
    <location>
        <begin position="1158"/>
        <end position="1170"/>
    </location>
</feature>
<feature type="glycosylation site" description="N-linked (GlcNAc...) asparagine" evidence="2">
    <location>
        <position position="129"/>
    </location>
</feature>
<feature type="glycosylation site" description="N-linked (GlcNAc...) asparagine" evidence="2">
    <location>
        <position position="132"/>
    </location>
</feature>
<feature type="glycosylation site" description="N-linked (GlcNAc...) asparagine" evidence="17">
    <location>
        <position position="346"/>
    </location>
</feature>
<feature type="glycosylation site" description="N-linked (GlcNAc...) asparagine" evidence="2">
    <location>
        <position position="420"/>
    </location>
</feature>
<feature type="glycosylation site" description="N-linked (GlcNAc...) asparagine" evidence="2">
    <location>
        <position position="550"/>
    </location>
</feature>
<feature type="glycosylation site" description="N-linked (GlcNAc...) asparagine" evidence="2">
    <location>
        <position position="631"/>
    </location>
</feature>
<feature type="glycosylation site" description="N-linked (GlcNAc...) asparagine" evidence="2">
    <location>
        <position position="1000"/>
    </location>
</feature>
<feature type="glycosylation site" description="N-linked (GlcNAc...) asparagine" evidence="2">
    <location>
        <position position="1056"/>
    </location>
</feature>
<feature type="disulfide bond" evidence="1">
    <location>
        <begin position="161"/>
        <end position="195"/>
    </location>
</feature>
<feature type="disulfide bond" evidence="1">
    <location>
        <begin position="165"/>
        <end position="200"/>
    </location>
</feature>
<feature type="disulfide bond" evidence="1">
    <location>
        <begin position="177"/>
        <end position="185"/>
    </location>
</feature>
<feature type="disulfide bond" evidence="1">
    <location>
        <begin position="330"/>
        <end position="376"/>
    </location>
</feature>
<feature type="sequence variant" id="VAR_022768" description="In dbSNP:rs2585033." evidence="5 6 15">
    <original>W</original>
    <variation>L</variation>
    <location>
        <position position="59"/>
    </location>
</feature>
<feature type="sequence variant" id="VAR_022769" evidence="5">
    <original>S</original>
    <variation>F</variation>
    <location>
        <position position="327"/>
    </location>
</feature>
<feature type="sequence variant" id="VAR_022770" description="Risk factor for lumbar disk disease in Japanese; increases binding and inhibition of TGFB1; dbSNP:rs2073711." evidence="5 6 9 10 15">
    <original>I</original>
    <variation>T</variation>
    <location>
        <position position="395"/>
    </location>
</feature>
<feature type="sequence variant" id="VAR_069430" description="In dbSNP:rs149286218." evidence="13">
    <original>R</original>
    <variation>H</variation>
    <location>
        <position position="495"/>
    </location>
</feature>
<feature type="sequence variant" id="VAR_022771" description="In dbSNP:rs2679118." evidence="5 6 9 10 11 15">
    <original>K</original>
    <variation>E</variation>
    <location>
        <position position="575"/>
    </location>
</feature>
<feature type="sequence variant" id="VAR_022772" description="In dbSNP:rs771628304." evidence="5">
    <original>A</original>
    <variation>V</variation>
    <location>
        <position position="895"/>
    </location>
</feature>
<feature type="sequence variant" id="VAR_022773" description="In dbSNP:rs2679117." evidence="5 6 9 10 11 15">
    <original>Q</original>
    <variation>R</variation>
    <location>
        <position position="979"/>
    </location>
</feature>
<feature type="sequence variant" id="VAR_069431" description="In dbSNP:rs768702821." evidence="13">
    <original>S</original>
    <variation>T</variation>
    <location>
        <position position="1032"/>
    </location>
</feature>
<feature type="sequence variant" id="VAR_022774" description="In dbSNP:rs769023414." evidence="5">
    <original>D</original>
    <variation>N</variation>
    <location>
        <position position="1101"/>
    </location>
</feature>
<feature type="sequence variant" id="VAR_022775" description="In dbSNP:rs938952." evidence="5 6 10 11 15">
    <original>G</original>
    <variation>S</variation>
    <location>
        <position position="1166"/>
    </location>
</feature>
<feature type="sequence variant" id="VAR_022776" description="In dbSNP:rs747702148." evidence="5">
    <original>V</original>
    <variation>A</variation>
    <location>
        <position position="1168"/>
    </location>
</feature>
<feature type="sequence conflict" description="In Ref. 1; AA sequence." evidence="16" ref="1">
    <original>G</original>
    <variation>M</variation>
    <location>
        <position position="54"/>
    </location>
</feature>
<feature type="sequence conflict" description="In Ref. 1; AA sequence." evidence="16" ref="1">
    <original>T</original>
    <variation>D</variation>
    <location>
        <position position="288"/>
    </location>
</feature>
<feature type="sequence conflict" description="In Ref. 1; AA sequence." evidence="16" ref="1">
    <original>R</original>
    <variation>D</variation>
    <location>
        <position position="305"/>
    </location>
</feature>
<feature type="sequence conflict" description="In Ref. 1; AA sequence." evidence="16" ref="1">
    <original>D</original>
    <variation>T</variation>
    <location>
        <position position="347"/>
    </location>
</feature>
<sequence length="1184" mass="132565">MVGTKAWVFSFLVLEVTSVLGRQTMLTQSVRRVQPGKKNPSIFAKPADTLESPGEWTTWFNIDYPGGKGDYERLDAIRFYYGDRVCARPLRLEARTTDWTPAGSTGQVVHGSPREGFWCLNREQRPGQNCSNYTVRFLCPPGSLRRDTERIWSPWSPWSKCSAACGQTGVQTRTRICLAEMVSLCSEASEEGQHCMGQDCTACDLTCPMGQVNADCDACMCQDFMLHGAVSLPGGAPASGAAIYLLTKTPKLLTQTDSDGRFRIPGLCPDGKSILKITKVKFAPIVLTMPKTSLKAATIKAEFVRAETPYMVMNPETKARRAGQSVSLCCKATGKPRPDKYFWYHNDTLLDPSLYKHESKLVLRKLQQHQAGEYFCKAQSDAGAVKSKVAQLIVIASDETPCNPVPESYLIRLPHDCFQNATNSFYYDVGRCPVKTCAGQQDNGIRCRDAVQNCCGISKTEEREIQCSGYTLPTKVAKECSCQRCTETRSIVRGRVSAADNGEPMRFGHVYMGNSRVSMTGYKGTFTLHVPQDTERLVLTFVDRLQKFVNTTKVLPFNKKGSAVFHEIKMLRRKKPITLEAMETNIIPLGEVVGEDPMAELEIPSRSFYRQNGEPYIGKVKASVTFLDPRNISTATAAQTDLNFINDEGDTFPLRTYGMFSVDFRDEVTSEPLNAGKVKVHLDSTQVKMPEHISTVKLWSLNPDTGLWEEEGDFKFENQRRNKREDRTFLVGNLEIRERRLFNLDVPESRRCFVKVRAYRSERFLPSEQIQGVVISVINLEPRTGFLSNPRAWGRFDSVITGPNGACVPAFCDDQSPDAYSAYVLASLAGEELQAVESSPKFNPNAIGVPQPYLNKLNYRRTDHEDPRVKKTAFQISMAKPRPNSAEESNGPIYAFENLRACEEAPPSAAHFRFYQIEGDRYDYNTVPFNEDDPMSWTEDYLAWWPKPMEFRACYIKVKIVGPLEVNVRSRNMGGTHRQTVGKLYGIRDVRSTRDRDQPNVSAACLEFKCSGMLYDQDRVDRTLVKVIPQGSCRRASVNPMLHEYLVNHLPLAVNNDTSEYTMLAPLDPLGHNYGIYTVTDQDPRTAKEIALGRCFDGTSDGSSRIMKSNVGVALTFNCVERQVGRQSAFQYLQSTPAQSPAAGTVQGRVPSRRQQRASRGGQRQGGVVASLRFPRVAQQPLIN</sequence>
<accession>O75339</accession>
<accession>B2R8F7</accession>
<accession>Q6UW99</accession>
<accession>Q8IYI5</accession>
<dbReference type="EMBL" id="AF035408">
    <property type="protein sequence ID" value="AAC33838.1"/>
    <property type="molecule type" value="mRNA"/>
</dbReference>
<dbReference type="EMBL" id="AB022430">
    <property type="protein sequence ID" value="BAA76692.1"/>
    <property type="molecule type" value="Genomic_DNA"/>
</dbReference>
<dbReference type="EMBL" id="AF035455">
    <property type="protein sequence ID" value="AAF14689.1"/>
    <property type="molecule type" value="Genomic_DNA"/>
</dbReference>
<dbReference type="EMBL" id="AF035448">
    <property type="protein sequence ID" value="AAF14689.1"/>
    <property type="status" value="JOINED"/>
    <property type="molecule type" value="Genomic_DNA"/>
</dbReference>
<dbReference type="EMBL" id="AF035451">
    <property type="protein sequence ID" value="AAF14689.1"/>
    <property type="status" value="JOINED"/>
    <property type="molecule type" value="Genomic_DNA"/>
</dbReference>
<dbReference type="EMBL" id="AF035453">
    <property type="protein sequence ID" value="AAF14689.1"/>
    <property type="status" value="JOINED"/>
    <property type="molecule type" value="Genomic_DNA"/>
</dbReference>
<dbReference type="EMBL" id="AF035449">
    <property type="protein sequence ID" value="AAF14689.1"/>
    <property type="status" value="JOINED"/>
    <property type="molecule type" value="Genomic_DNA"/>
</dbReference>
<dbReference type="EMBL" id="AY358904">
    <property type="protein sequence ID" value="AAQ89263.1"/>
    <property type="molecule type" value="mRNA"/>
</dbReference>
<dbReference type="EMBL" id="AK313352">
    <property type="protein sequence ID" value="BAG36154.1"/>
    <property type="molecule type" value="mRNA"/>
</dbReference>
<dbReference type="EMBL" id="AC068213">
    <property type="status" value="NOT_ANNOTATED_CDS"/>
    <property type="molecule type" value="Genomic_DNA"/>
</dbReference>
<dbReference type="EMBL" id="BC035776">
    <property type="protein sequence ID" value="AAH35776.1"/>
    <property type="molecule type" value="mRNA"/>
</dbReference>
<dbReference type="CCDS" id="CCDS10203.1"/>
<dbReference type="PIR" id="T09484">
    <property type="entry name" value="T09484"/>
</dbReference>
<dbReference type="RefSeq" id="NP_003604.4">
    <property type="nucleotide sequence ID" value="NM_003613.4"/>
</dbReference>
<dbReference type="SMR" id="O75339"/>
<dbReference type="BioGRID" id="114057">
    <property type="interactions" value="2"/>
</dbReference>
<dbReference type="FunCoup" id="O75339">
    <property type="interactions" value="130"/>
</dbReference>
<dbReference type="IntAct" id="O75339">
    <property type="interactions" value="2"/>
</dbReference>
<dbReference type="STRING" id="9606.ENSP00000261883"/>
<dbReference type="GlyConnect" id="1075">
    <property type="glycosylation" value="15 N-Linked glycans (5 sites)"/>
</dbReference>
<dbReference type="GlyCosmos" id="O75339">
    <property type="glycosylation" value="11 sites, 15 glycans"/>
</dbReference>
<dbReference type="GlyGen" id="O75339">
    <property type="glycosylation" value="16 sites, 16 N-linked glycans (5 sites), 3 O-linked glycans (8 sites)"/>
</dbReference>
<dbReference type="iPTMnet" id="O75339"/>
<dbReference type="PhosphoSitePlus" id="O75339"/>
<dbReference type="BioMuta" id="CILP"/>
<dbReference type="MassIVE" id="O75339"/>
<dbReference type="PaxDb" id="9606-ENSP00000261883"/>
<dbReference type="PeptideAtlas" id="O75339"/>
<dbReference type="ProteomicsDB" id="49908"/>
<dbReference type="Antibodypedia" id="760">
    <property type="antibodies" value="154 antibodies from 29 providers"/>
</dbReference>
<dbReference type="DNASU" id="8483"/>
<dbReference type="Ensembl" id="ENST00000261883.6">
    <property type="protein sequence ID" value="ENSP00000261883.4"/>
    <property type="gene ID" value="ENSG00000138615.6"/>
</dbReference>
<dbReference type="GeneID" id="8483"/>
<dbReference type="KEGG" id="hsa:8483"/>
<dbReference type="MANE-Select" id="ENST00000261883.6">
    <property type="protein sequence ID" value="ENSP00000261883.4"/>
    <property type="RefSeq nucleotide sequence ID" value="NM_003613.4"/>
    <property type="RefSeq protein sequence ID" value="NP_003604.4"/>
</dbReference>
<dbReference type="UCSC" id="uc002aon.3">
    <property type="organism name" value="human"/>
</dbReference>
<dbReference type="AGR" id="HGNC:1980"/>
<dbReference type="CTD" id="8483"/>
<dbReference type="DisGeNET" id="8483"/>
<dbReference type="GeneCards" id="CILP"/>
<dbReference type="HGNC" id="HGNC:1980">
    <property type="gene designation" value="CILP"/>
</dbReference>
<dbReference type="HPA" id="ENSG00000138615">
    <property type="expression patterns" value="Low tissue specificity"/>
</dbReference>
<dbReference type="MalaCards" id="CILP"/>
<dbReference type="MIM" id="603489">
    <property type="type" value="gene"/>
</dbReference>
<dbReference type="MIM" id="603932">
    <property type="type" value="phenotype"/>
</dbReference>
<dbReference type="neXtProt" id="NX_O75339"/>
<dbReference type="OpenTargets" id="ENSG00000138615"/>
<dbReference type="PharmGKB" id="PA26518"/>
<dbReference type="VEuPathDB" id="HostDB:ENSG00000138615"/>
<dbReference type="eggNOG" id="ENOG502QQ8H">
    <property type="taxonomic scope" value="Eukaryota"/>
</dbReference>
<dbReference type="GeneTree" id="ENSGT00390000008152"/>
<dbReference type="HOGENOM" id="CLU_008073_0_0_1"/>
<dbReference type="InParanoid" id="O75339"/>
<dbReference type="OMA" id="RAETPYM"/>
<dbReference type="OrthoDB" id="9929167at2759"/>
<dbReference type="PAN-GO" id="O75339">
    <property type="GO annotations" value="3 GO annotations based on evolutionary models"/>
</dbReference>
<dbReference type="PhylomeDB" id="O75339"/>
<dbReference type="TreeFam" id="TF330132"/>
<dbReference type="PathwayCommons" id="O75339"/>
<dbReference type="Reactome" id="R-HSA-2404192">
    <property type="pathway name" value="Signaling by Type 1 Insulin-like Growth Factor 1 Receptor (IGF1R)"/>
</dbReference>
<dbReference type="SignaLink" id="O75339"/>
<dbReference type="BioGRID-ORCS" id="8483">
    <property type="hits" value="15 hits in 1137 CRISPR screens"/>
</dbReference>
<dbReference type="ChiTaRS" id="CILP">
    <property type="organism name" value="human"/>
</dbReference>
<dbReference type="GeneWiki" id="CILP"/>
<dbReference type="GenomeRNAi" id="8483"/>
<dbReference type="Pharos" id="O75339">
    <property type="development level" value="Tbio"/>
</dbReference>
<dbReference type="PRO" id="PR:O75339"/>
<dbReference type="Proteomes" id="UP000005640">
    <property type="component" value="Chromosome 15"/>
</dbReference>
<dbReference type="RNAct" id="O75339">
    <property type="molecule type" value="protein"/>
</dbReference>
<dbReference type="Bgee" id="ENSG00000138615">
    <property type="expression patterns" value="Expressed in calcaneal tendon and 155 other cell types or tissues"/>
</dbReference>
<dbReference type="GO" id="GO:0062023">
    <property type="term" value="C:collagen-containing extracellular matrix"/>
    <property type="evidence" value="ECO:0000314"/>
    <property type="project" value="BHF-UCL"/>
</dbReference>
<dbReference type="GO" id="GO:0070062">
    <property type="term" value="C:extracellular exosome"/>
    <property type="evidence" value="ECO:0007005"/>
    <property type="project" value="UniProtKB"/>
</dbReference>
<dbReference type="GO" id="GO:0005615">
    <property type="term" value="C:extracellular space"/>
    <property type="evidence" value="ECO:0000314"/>
    <property type="project" value="BHF-UCL"/>
</dbReference>
<dbReference type="GO" id="GO:0010629">
    <property type="term" value="P:negative regulation of gene expression"/>
    <property type="evidence" value="ECO:0000314"/>
    <property type="project" value="BHF-UCL"/>
</dbReference>
<dbReference type="GO" id="GO:0043569">
    <property type="term" value="P:negative regulation of insulin-like growth factor receptor signaling pathway"/>
    <property type="evidence" value="ECO:0000314"/>
    <property type="project" value="BHF-UCL"/>
</dbReference>
<dbReference type="GO" id="GO:0060392">
    <property type="term" value="P:negative regulation of SMAD protein signal transduction"/>
    <property type="evidence" value="ECO:0000316"/>
    <property type="project" value="BHF-UCL"/>
</dbReference>
<dbReference type="GO" id="GO:0030512">
    <property type="term" value="P:negative regulation of transforming growth factor beta receptor signaling pathway"/>
    <property type="evidence" value="ECO:0000314"/>
    <property type="project" value="BHF-UCL"/>
</dbReference>
<dbReference type="CDD" id="cd00096">
    <property type="entry name" value="Ig"/>
    <property type="match status" value="1"/>
</dbReference>
<dbReference type="FunFam" id="2.20.100.10:FF:000096">
    <property type="entry name" value="Cartilage intermediate layer protein 1"/>
    <property type="match status" value="1"/>
</dbReference>
<dbReference type="FunFam" id="2.60.40.10:FF:001254">
    <property type="entry name" value="Cartilage intermediate layer protein 2"/>
    <property type="match status" value="1"/>
</dbReference>
<dbReference type="Gene3D" id="2.60.40.10">
    <property type="entry name" value="Immunoglobulins"/>
    <property type="match status" value="1"/>
</dbReference>
<dbReference type="Gene3D" id="2.20.100.10">
    <property type="entry name" value="Thrombospondin type-1 (TSP1) repeat"/>
    <property type="match status" value="1"/>
</dbReference>
<dbReference type="InterPro" id="IPR008969">
    <property type="entry name" value="CarboxyPept-like_regulatory"/>
</dbReference>
<dbReference type="InterPro" id="IPR056257">
    <property type="entry name" value="CILP-1/2_8th"/>
</dbReference>
<dbReference type="InterPro" id="IPR056256">
    <property type="entry name" value="CILP-1/2_b-sand_dom2"/>
</dbReference>
<dbReference type="InterPro" id="IPR056258">
    <property type="entry name" value="CILP-1/2_C"/>
</dbReference>
<dbReference type="InterPro" id="IPR056255">
    <property type="entry name" value="CILP-1/2_dom"/>
</dbReference>
<dbReference type="InterPro" id="IPR039675">
    <property type="entry name" value="CILP1/CILP2"/>
</dbReference>
<dbReference type="InterPro" id="IPR007110">
    <property type="entry name" value="Ig-like_dom"/>
</dbReference>
<dbReference type="InterPro" id="IPR036179">
    <property type="entry name" value="Ig-like_dom_sf"/>
</dbReference>
<dbReference type="InterPro" id="IPR013783">
    <property type="entry name" value="Ig-like_fold"/>
</dbReference>
<dbReference type="InterPro" id="IPR003599">
    <property type="entry name" value="Ig_sub"/>
</dbReference>
<dbReference type="InterPro" id="IPR003598">
    <property type="entry name" value="Ig_sub2"/>
</dbReference>
<dbReference type="InterPro" id="IPR000884">
    <property type="entry name" value="TSP1_rpt"/>
</dbReference>
<dbReference type="InterPro" id="IPR036383">
    <property type="entry name" value="TSP1_rpt_sf"/>
</dbReference>
<dbReference type="InterPro" id="IPR025155">
    <property type="entry name" value="WxxW_domain"/>
</dbReference>
<dbReference type="PANTHER" id="PTHR15031:SF3">
    <property type="entry name" value="CARTILAGE INTERMEDIATE LAYER PROTEIN 1"/>
    <property type="match status" value="1"/>
</dbReference>
<dbReference type="PANTHER" id="PTHR15031">
    <property type="entry name" value="CARTILAGE INTERMEDIATE LAYER PROTEIN CLIP"/>
    <property type="match status" value="1"/>
</dbReference>
<dbReference type="Pfam" id="PF23591">
    <property type="entry name" value="CILP"/>
    <property type="match status" value="1"/>
</dbReference>
<dbReference type="Pfam" id="PF23708">
    <property type="entry name" value="CILP_5th"/>
    <property type="match status" value="1"/>
</dbReference>
<dbReference type="Pfam" id="PF23730">
    <property type="entry name" value="CILP_8th"/>
    <property type="match status" value="1"/>
</dbReference>
<dbReference type="Pfam" id="PF23599">
    <property type="entry name" value="CILP_C"/>
    <property type="match status" value="1"/>
</dbReference>
<dbReference type="Pfam" id="PF13927">
    <property type="entry name" value="Ig_3"/>
    <property type="match status" value="1"/>
</dbReference>
<dbReference type="Pfam" id="PF13330">
    <property type="entry name" value="Mucin2_WxxW"/>
    <property type="match status" value="1"/>
</dbReference>
<dbReference type="Pfam" id="PF00090">
    <property type="entry name" value="TSP_1"/>
    <property type="match status" value="1"/>
</dbReference>
<dbReference type="SMART" id="SM00409">
    <property type="entry name" value="IG"/>
    <property type="match status" value="1"/>
</dbReference>
<dbReference type="SMART" id="SM00408">
    <property type="entry name" value="IGc2"/>
    <property type="match status" value="1"/>
</dbReference>
<dbReference type="SMART" id="SM00209">
    <property type="entry name" value="TSP1"/>
    <property type="match status" value="1"/>
</dbReference>
<dbReference type="SUPFAM" id="SSF49464">
    <property type="entry name" value="Carboxypeptidase regulatory domain-like"/>
    <property type="match status" value="1"/>
</dbReference>
<dbReference type="SUPFAM" id="SSF48726">
    <property type="entry name" value="Immunoglobulin"/>
    <property type="match status" value="1"/>
</dbReference>
<dbReference type="SUPFAM" id="SSF82895">
    <property type="entry name" value="TSP-1 type 1 repeat"/>
    <property type="match status" value="1"/>
</dbReference>
<dbReference type="PROSITE" id="PS50835">
    <property type="entry name" value="IG_LIKE"/>
    <property type="match status" value="1"/>
</dbReference>
<dbReference type="PROSITE" id="PS50092">
    <property type="entry name" value="TSP1"/>
    <property type="match status" value="1"/>
</dbReference>
<proteinExistence type="evidence at protein level"/>